<dbReference type="EMBL" id="BA000022">
    <property type="protein sequence ID" value="BAA10714.1"/>
    <property type="molecule type" value="Genomic_DNA"/>
</dbReference>
<dbReference type="PIR" id="S77022">
    <property type="entry name" value="S77022"/>
</dbReference>
<dbReference type="SMR" id="Q55946"/>
<dbReference type="IntAct" id="Q55946">
    <property type="interactions" value="1"/>
</dbReference>
<dbReference type="STRING" id="1148.gene:10500218"/>
<dbReference type="PaxDb" id="1148-1001832"/>
<dbReference type="EnsemblBacteria" id="BAA10714">
    <property type="protein sequence ID" value="BAA10714"/>
    <property type="gene ID" value="BAA10714"/>
</dbReference>
<dbReference type="KEGG" id="syn:sll0787"/>
<dbReference type="eggNOG" id="COG2144">
    <property type="taxonomic scope" value="Bacteria"/>
</dbReference>
<dbReference type="InParanoid" id="Q55946"/>
<dbReference type="PhylomeDB" id="Q55946"/>
<dbReference type="Proteomes" id="UP000001425">
    <property type="component" value="Chromosome"/>
</dbReference>
<dbReference type="GO" id="GO:0009030">
    <property type="term" value="F:thiamine-phosphate kinase activity"/>
    <property type="evidence" value="ECO:0007669"/>
    <property type="project" value="InterPro"/>
</dbReference>
<dbReference type="GO" id="GO:0009228">
    <property type="term" value="P:thiamine biosynthetic process"/>
    <property type="evidence" value="ECO:0007669"/>
    <property type="project" value="InterPro"/>
</dbReference>
<dbReference type="CDD" id="cd02192">
    <property type="entry name" value="PurM-like3"/>
    <property type="match status" value="1"/>
</dbReference>
<dbReference type="FunFam" id="3.90.650.10:FF:000036">
    <property type="entry name" value="AIR synthase related protein"/>
    <property type="match status" value="1"/>
</dbReference>
<dbReference type="Gene3D" id="3.90.650.10">
    <property type="entry name" value="PurM-like C-terminal domain"/>
    <property type="match status" value="1"/>
</dbReference>
<dbReference type="Gene3D" id="3.30.1330.10">
    <property type="entry name" value="PurM-like, N-terminal domain"/>
    <property type="match status" value="1"/>
</dbReference>
<dbReference type="InterPro" id="IPR024030">
    <property type="entry name" value="AIR_synthase-rel_sll0787"/>
</dbReference>
<dbReference type="InterPro" id="IPR010918">
    <property type="entry name" value="PurM-like_C_dom"/>
</dbReference>
<dbReference type="InterPro" id="IPR036676">
    <property type="entry name" value="PurM-like_C_sf"/>
</dbReference>
<dbReference type="InterPro" id="IPR016188">
    <property type="entry name" value="PurM-like_N"/>
</dbReference>
<dbReference type="InterPro" id="IPR036921">
    <property type="entry name" value="PurM-like_N_sf"/>
</dbReference>
<dbReference type="InterPro" id="IPR006283">
    <property type="entry name" value="ThiL-like"/>
</dbReference>
<dbReference type="InterPro" id="IPR011413">
    <property type="entry name" value="UCP036540_AIR"/>
</dbReference>
<dbReference type="NCBIfam" id="TIGR04049">
    <property type="entry name" value="AIR_rel_sll0787"/>
    <property type="match status" value="1"/>
</dbReference>
<dbReference type="PANTHER" id="PTHR30270">
    <property type="entry name" value="THIAMINE-MONOPHOSPHATE KINASE"/>
    <property type="match status" value="1"/>
</dbReference>
<dbReference type="PANTHER" id="PTHR30270:SF0">
    <property type="entry name" value="THIAMINE-MONOPHOSPHATE KINASE"/>
    <property type="match status" value="1"/>
</dbReference>
<dbReference type="Pfam" id="PF00586">
    <property type="entry name" value="AIRS"/>
    <property type="match status" value="1"/>
</dbReference>
<dbReference type="Pfam" id="PF02769">
    <property type="entry name" value="AIRS_C"/>
    <property type="match status" value="1"/>
</dbReference>
<dbReference type="PIRSF" id="PIRSF036540">
    <property type="entry name" value="UCP036540_AIR"/>
    <property type="match status" value="1"/>
</dbReference>
<dbReference type="SUPFAM" id="SSF56042">
    <property type="entry name" value="PurM C-terminal domain-like"/>
    <property type="match status" value="1"/>
</dbReference>
<dbReference type="SUPFAM" id="SSF55326">
    <property type="entry name" value="PurM N-terminal domain-like"/>
    <property type="match status" value="1"/>
</dbReference>
<sequence length="322" mass="34724">MLTDLIIELQQTLGILHKQDIQLASRQGQQRLIGDGEAIRLGDDCAAIPDENGYLLLAAEGMAPSLITQDPWFAGWCSVLVNVSDIYAMGGRPIAVVDALWSKSSDQAQQIWAGMQAASARFNVPIVGGHTNTHSGYDALGVAILGRAKSLITSFDAQVGDRLILVSNFQGKPRPNAPYCWDAATMAETETLQKHWDLLPYLAENKLCDAGKDVSMGGIIGTALMLLETSKCGAILDLDAISCPAGLDFRQWLLSFPSYGFLLSVRPQFVKTVKACFQAEGLIAEAIATIQPGHNLTLKLGSESQLFWDLQQNPLTGFTGDS</sequence>
<protein>
    <recommendedName>
        <fullName>Uncharacterized protein sll0787</fullName>
    </recommendedName>
</protein>
<organism>
    <name type="scientific">Synechocystis sp. (strain ATCC 27184 / PCC 6803 / Kazusa)</name>
    <dbReference type="NCBI Taxonomy" id="1111708"/>
    <lineage>
        <taxon>Bacteria</taxon>
        <taxon>Bacillati</taxon>
        <taxon>Cyanobacteriota</taxon>
        <taxon>Cyanophyceae</taxon>
        <taxon>Synechococcales</taxon>
        <taxon>Merismopediaceae</taxon>
        <taxon>Synechocystis</taxon>
    </lineage>
</organism>
<accession>Q55946</accession>
<comment type="similarity">
    <text evidence="1">To M.jannaschii MJ0640 and MJ0799.</text>
</comment>
<keyword id="KW-1185">Reference proteome</keyword>
<gene>
    <name type="ordered locus">sll0787</name>
</gene>
<reference key="1">
    <citation type="journal article" date="1995" name="DNA Res.">
        <title>Sequence analysis of the genome of the unicellular cyanobacterium Synechocystis sp. strain PCC6803. I. Sequence features in the 1 Mb region from map positions 64% to 92% of the genome.</title>
        <authorList>
            <person name="Kaneko T."/>
            <person name="Tanaka A."/>
            <person name="Sato S."/>
            <person name="Kotani H."/>
            <person name="Sazuka T."/>
            <person name="Miyajima N."/>
            <person name="Sugiura M."/>
            <person name="Tabata S."/>
        </authorList>
    </citation>
    <scope>NUCLEOTIDE SEQUENCE [LARGE SCALE GENOMIC DNA]</scope>
    <source>
        <strain>ATCC 27184 / PCC 6803 / N-1</strain>
    </source>
</reference>
<reference key="2">
    <citation type="journal article" date="1996" name="DNA Res.">
        <title>Sequence analysis of the genome of the unicellular cyanobacterium Synechocystis sp. strain PCC6803. II. Sequence determination of the entire genome and assignment of potential protein-coding regions.</title>
        <authorList>
            <person name="Kaneko T."/>
            <person name="Sato S."/>
            <person name="Kotani H."/>
            <person name="Tanaka A."/>
            <person name="Asamizu E."/>
            <person name="Nakamura Y."/>
            <person name="Miyajima N."/>
            <person name="Hirosawa M."/>
            <person name="Sugiura M."/>
            <person name="Sasamoto S."/>
            <person name="Kimura T."/>
            <person name="Hosouchi T."/>
            <person name="Matsuno A."/>
            <person name="Muraki A."/>
            <person name="Nakazaki N."/>
            <person name="Naruo K."/>
            <person name="Okumura S."/>
            <person name="Shimpo S."/>
            <person name="Takeuchi C."/>
            <person name="Wada T."/>
            <person name="Watanabe A."/>
            <person name="Yamada M."/>
            <person name="Yasuda M."/>
            <person name="Tabata S."/>
        </authorList>
    </citation>
    <scope>NUCLEOTIDE SEQUENCE [LARGE SCALE GENOMIC DNA]</scope>
    <source>
        <strain>ATCC 27184 / PCC 6803 / Kazusa</strain>
    </source>
</reference>
<feature type="chain" id="PRO_0000157876" description="Uncharacterized protein sll0787">
    <location>
        <begin position="1"/>
        <end position="322"/>
    </location>
</feature>
<name>Y787_SYNY3</name>
<proteinExistence type="predicted"/>
<evidence type="ECO:0000305" key="1"/>